<protein>
    <recommendedName>
        <fullName evidence="1">tRNA-cytidine(32) 2-sulfurtransferase</fullName>
        <ecNumber evidence="1">2.8.1.-</ecNumber>
    </recommendedName>
    <alternativeName>
        <fullName evidence="1">Two-thiocytidine biosynthesis protein A</fullName>
    </alternativeName>
    <alternativeName>
        <fullName evidence="1">tRNA 2-thiocytidine biosynthesis protein TtcA</fullName>
    </alternativeName>
</protein>
<organism>
    <name type="scientific">Shigella sonnei (strain Ss046)</name>
    <dbReference type="NCBI Taxonomy" id="300269"/>
    <lineage>
        <taxon>Bacteria</taxon>
        <taxon>Pseudomonadati</taxon>
        <taxon>Pseudomonadota</taxon>
        <taxon>Gammaproteobacteria</taxon>
        <taxon>Enterobacterales</taxon>
        <taxon>Enterobacteriaceae</taxon>
        <taxon>Shigella</taxon>
    </lineage>
</organism>
<reference key="1">
    <citation type="journal article" date="2005" name="Nucleic Acids Res.">
        <title>Genome dynamics and diversity of Shigella species, the etiologic agents of bacillary dysentery.</title>
        <authorList>
            <person name="Yang F."/>
            <person name="Yang J."/>
            <person name="Zhang X."/>
            <person name="Chen L."/>
            <person name="Jiang Y."/>
            <person name="Yan Y."/>
            <person name="Tang X."/>
            <person name="Wang J."/>
            <person name="Xiong Z."/>
            <person name="Dong J."/>
            <person name="Xue Y."/>
            <person name="Zhu Y."/>
            <person name="Xu X."/>
            <person name="Sun L."/>
            <person name="Chen S."/>
            <person name="Nie H."/>
            <person name="Peng J."/>
            <person name="Xu J."/>
            <person name="Wang Y."/>
            <person name="Yuan Z."/>
            <person name="Wen Y."/>
            <person name="Yao Z."/>
            <person name="Shen Y."/>
            <person name="Qiang B."/>
            <person name="Hou Y."/>
            <person name="Yu J."/>
            <person name="Jin Q."/>
        </authorList>
    </citation>
    <scope>NUCLEOTIDE SEQUENCE [LARGE SCALE GENOMIC DNA]</scope>
    <source>
        <strain>Ss046</strain>
    </source>
</reference>
<evidence type="ECO:0000255" key="1">
    <source>
        <dbReference type="HAMAP-Rule" id="MF_01850"/>
    </source>
</evidence>
<accession>Q3Z194</accession>
<feature type="chain" id="PRO_0000348853" description="tRNA-cytidine(32) 2-sulfurtransferase">
    <location>
        <begin position="1"/>
        <end position="311"/>
    </location>
</feature>
<feature type="short sequence motif" description="PP-loop motif" evidence="1">
    <location>
        <begin position="47"/>
        <end position="52"/>
    </location>
</feature>
<feature type="binding site" evidence="1">
    <location>
        <position position="122"/>
    </location>
    <ligand>
        <name>[4Fe-4S] cluster</name>
        <dbReference type="ChEBI" id="CHEBI:49883"/>
    </ligand>
</feature>
<feature type="binding site" evidence="1">
    <location>
        <position position="125"/>
    </location>
    <ligand>
        <name>[4Fe-4S] cluster</name>
        <dbReference type="ChEBI" id="CHEBI:49883"/>
    </ligand>
</feature>
<feature type="binding site" evidence="1">
    <location>
        <position position="213"/>
    </location>
    <ligand>
        <name>[4Fe-4S] cluster</name>
        <dbReference type="ChEBI" id="CHEBI:49883"/>
    </ligand>
</feature>
<name>TTCA_SHISS</name>
<comment type="function">
    <text evidence="1">Catalyzes the ATP-dependent 2-thiolation of cytidine in position 32 of tRNA, to form 2-thiocytidine (s(2)C32). The sulfur atoms are provided by the cysteine/cysteine desulfurase (IscS) system.</text>
</comment>
<comment type="catalytic activity">
    <reaction evidence="1">
        <text>cytidine(32) in tRNA + S-sulfanyl-L-cysteinyl-[cysteine desulfurase] + AH2 + ATP = 2-thiocytidine(32) in tRNA + L-cysteinyl-[cysteine desulfurase] + A + AMP + diphosphate + H(+)</text>
        <dbReference type="Rhea" id="RHEA:57048"/>
        <dbReference type="Rhea" id="RHEA-COMP:10288"/>
        <dbReference type="Rhea" id="RHEA-COMP:12157"/>
        <dbReference type="Rhea" id="RHEA-COMP:12158"/>
        <dbReference type="Rhea" id="RHEA-COMP:14821"/>
        <dbReference type="ChEBI" id="CHEBI:13193"/>
        <dbReference type="ChEBI" id="CHEBI:15378"/>
        <dbReference type="ChEBI" id="CHEBI:17499"/>
        <dbReference type="ChEBI" id="CHEBI:29950"/>
        <dbReference type="ChEBI" id="CHEBI:30616"/>
        <dbReference type="ChEBI" id="CHEBI:33019"/>
        <dbReference type="ChEBI" id="CHEBI:61963"/>
        <dbReference type="ChEBI" id="CHEBI:82748"/>
        <dbReference type="ChEBI" id="CHEBI:141453"/>
        <dbReference type="ChEBI" id="CHEBI:456215"/>
    </reaction>
    <physiologicalReaction direction="left-to-right" evidence="1">
        <dbReference type="Rhea" id="RHEA:57049"/>
    </physiologicalReaction>
</comment>
<comment type="cofactor">
    <cofactor evidence="1">
        <name>Mg(2+)</name>
        <dbReference type="ChEBI" id="CHEBI:18420"/>
    </cofactor>
</comment>
<comment type="cofactor">
    <cofactor evidence="1">
        <name>[4Fe-4S] cluster</name>
        <dbReference type="ChEBI" id="CHEBI:49883"/>
    </cofactor>
    <text evidence="1">Binds 1 [4Fe-4S] cluster per subunit. The cluster is chelated by three Cys residues, the fourth Fe has a free coordination site that may bind a sulfur atom transferred from the persulfide of IscS.</text>
</comment>
<comment type="pathway">
    <text evidence="1">tRNA modification.</text>
</comment>
<comment type="subunit">
    <text evidence="1">Homodimer.</text>
</comment>
<comment type="subcellular location">
    <subcellularLocation>
        <location evidence="1">Cytoplasm</location>
    </subcellularLocation>
</comment>
<comment type="miscellaneous">
    <text evidence="1">The thiolation reaction likely consists of two steps: a first activation step by ATP to form an adenylated intermediate of the target base of tRNA, and a second nucleophilic substitution step of the sulfur (S) atom supplied by the hydrosulfide attached to the Fe-S cluster.</text>
</comment>
<comment type="similarity">
    <text evidence="1">Belongs to the TtcA family.</text>
</comment>
<proteinExistence type="inferred from homology"/>
<keyword id="KW-0004">4Fe-4S</keyword>
<keyword id="KW-0067">ATP-binding</keyword>
<keyword id="KW-0963">Cytoplasm</keyword>
<keyword id="KW-0408">Iron</keyword>
<keyword id="KW-0411">Iron-sulfur</keyword>
<keyword id="KW-0460">Magnesium</keyword>
<keyword id="KW-0479">Metal-binding</keyword>
<keyword id="KW-0547">Nucleotide-binding</keyword>
<keyword id="KW-1185">Reference proteome</keyword>
<keyword id="KW-0694">RNA-binding</keyword>
<keyword id="KW-0808">Transferase</keyword>
<keyword id="KW-0819">tRNA processing</keyword>
<keyword id="KW-0820">tRNA-binding</keyword>
<dbReference type="EC" id="2.8.1.-" evidence="1"/>
<dbReference type="EMBL" id="CP000038">
    <property type="protein sequence ID" value="AAZ88468.1"/>
    <property type="molecule type" value="Genomic_DNA"/>
</dbReference>
<dbReference type="RefSeq" id="WP_001157407.1">
    <property type="nucleotide sequence ID" value="NC_007384.1"/>
</dbReference>
<dbReference type="SMR" id="Q3Z194"/>
<dbReference type="GeneID" id="93775481"/>
<dbReference type="KEGG" id="ssn:SSON_1787"/>
<dbReference type="HOGENOM" id="CLU_026481_0_0_6"/>
<dbReference type="Proteomes" id="UP000002529">
    <property type="component" value="Chromosome"/>
</dbReference>
<dbReference type="GO" id="GO:0005737">
    <property type="term" value="C:cytoplasm"/>
    <property type="evidence" value="ECO:0007669"/>
    <property type="project" value="UniProtKB-SubCell"/>
</dbReference>
<dbReference type="GO" id="GO:0051539">
    <property type="term" value="F:4 iron, 4 sulfur cluster binding"/>
    <property type="evidence" value="ECO:0007669"/>
    <property type="project" value="UniProtKB-UniRule"/>
</dbReference>
<dbReference type="GO" id="GO:0005524">
    <property type="term" value="F:ATP binding"/>
    <property type="evidence" value="ECO:0007669"/>
    <property type="project" value="UniProtKB-UniRule"/>
</dbReference>
<dbReference type="GO" id="GO:0000287">
    <property type="term" value="F:magnesium ion binding"/>
    <property type="evidence" value="ECO:0007669"/>
    <property type="project" value="UniProtKB-UniRule"/>
</dbReference>
<dbReference type="GO" id="GO:0016783">
    <property type="term" value="F:sulfurtransferase activity"/>
    <property type="evidence" value="ECO:0007669"/>
    <property type="project" value="UniProtKB-UniRule"/>
</dbReference>
<dbReference type="GO" id="GO:0000049">
    <property type="term" value="F:tRNA binding"/>
    <property type="evidence" value="ECO:0007669"/>
    <property type="project" value="UniProtKB-KW"/>
</dbReference>
<dbReference type="GO" id="GO:0034227">
    <property type="term" value="P:tRNA thio-modification"/>
    <property type="evidence" value="ECO:0007669"/>
    <property type="project" value="UniProtKB-UniRule"/>
</dbReference>
<dbReference type="CDD" id="cd24138">
    <property type="entry name" value="TtcA-like"/>
    <property type="match status" value="1"/>
</dbReference>
<dbReference type="FunFam" id="3.40.50.620:FF:000046">
    <property type="entry name" value="tRNA-cytidine(32) 2-sulfurtransferase"/>
    <property type="match status" value="1"/>
</dbReference>
<dbReference type="Gene3D" id="3.40.50.620">
    <property type="entry name" value="HUPs"/>
    <property type="match status" value="1"/>
</dbReference>
<dbReference type="HAMAP" id="MF_01850">
    <property type="entry name" value="TtcA"/>
    <property type="match status" value="1"/>
</dbReference>
<dbReference type="InterPro" id="IPR014729">
    <property type="entry name" value="Rossmann-like_a/b/a_fold"/>
</dbReference>
<dbReference type="InterPro" id="IPR011063">
    <property type="entry name" value="TilS/TtcA_N"/>
</dbReference>
<dbReference type="InterPro" id="IPR012089">
    <property type="entry name" value="tRNA_Cyd_32_2_STrfase"/>
</dbReference>
<dbReference type="InterPro" id="IPR035107">
    <property type="entry name" value="tRNA_thiolation_TtcA_Ctu1"/>
</dbReference>
<dbReference type="NCBIfam" id="NF007972">
    <property type="entry name" value="PRK10696.1"/>
    <property type="match status" value="1"/>
</dbReference>
<dbReference type="PANTHER" id="PTHR43686:SF1">
    <property type="entry name" value="AMINOTRAN_5 DOMAIN-CONTAINING PROTEIN"/>
    <property type="match status" value="1"/>
</dbReference>
<dbReference type="PANTHER" id="PTHR43686">
    <property type="entry name" value="SULFURTRANSFERASE-RELATED"/>
    <property type="match status" value="1"/>
</dbReference>
<dbReference type="Pfam" id="PF01171">
    <property type="entry name" value="ATP_bind_3"/>
    <property type="match status" value="1"/>
</dbReference>
<dbReference type="PIRSF" id="PIRSF004976">
    <property type="entry name" value="ATPase_YdaO"/>
    <property type="match status" value="1"/>
</dbReference>
<dbReference type="SUPFAM" id="SSF52402">
    <property type="entry name" value="Adenine nucleotide alpha hydrolases-like"/>
    <property type="match status" value="1"/>
</dbReference>
<sequence>MQENQQITKKEQYNLNKLQKRLRRNVGEAIADFNMIEEGDRIMVCLSGGKDSYTMLEILRNLQQSAPINFSLVAVNLDQKQPGFPEHVLPEYLEKLGVEYKIVEENTYGIVKEKIPEGKTTCSLCSRLRRGILYRTATELGATKIALGHHRDDILQTLFLNMFYGGKMKGMPPKLMSDDGKHIVIRPLAYCREKDIQRFADAKAFPIIPCNLCGSQPNLQRQVIADMLRDWDKRYPGRIETMFSAMQNVVPSHLCDTNLFDFKGITHGSEVVNGGDLAFDREEIPLQPAGWQPEEDENQLDELRLNVVEVK</sequence>
<gene>
    <name evidence="1" type="primary">ttcA</name>
    <name type="ordered locus">SSON_1787</name>
</gene>